<protein>
    <recommendedName>
        <fullName evidence="1">Elongation factor 4</fullName>
        <shortName evidence="1">EF-4</shortName>
        <ecNumber evidence="1">3.6.5.n1</ecNumber>
    </recommendedName>
    <alternativeName>
        <fullName evidence="1">Ribosomal back-translocase LepA</fullName>
    </alternativeName>
</protein>
<organism>
    <name type="scientific">Neisseria meningitidis serogroup B (strain ATCC BAA-335 / MC58)</name>
    <dbReference type="NCBI Taxonomy" id="122586"/>
    <lineage>
        <taxon>Bacteria</taxon>
        <taxon>Pseudomonadati</taxon>
        <taxon>Pseudomonadota</taxon>
        <taxon>Betaproteobacteria</taxon>
        <taxon>Neisseriales</taxon>
        <taxon>Neisseriaceae</taxon>
        <taxon>Neisseria</taxon>
    </lineage>
</organism>
<keyword id="KW-0997">Cell inner membrane</keyword>
<keyword id="KW-1003">Cell membrane</keyword>
<keyword id="KW-0342">GTP-binding</keyword>
<keyword id="KW-0378">Hydrolase</keyword>
<keyword id="KW-0472">Membrane</keyword>
<keyword id="KW-0547">Nucleotide-binding</keyword>
<keyword id="KW-0648">Protein biosynthesis</keyword>
<keyword id="KW-1185">Reference proteome</keyword>
<comment type="function">
    <text evidence="1">Required for accurate and efficient protein synthesis under certain stress conditions. May act as a fidelity factor of the translation reaction, by catalyzing a one-codon backward translocation of tRNAs on improperly translocated ribosomes. Back-translocation proceeds from a post-translocation (POST) complex to a pre-translocation (PRE) complex, thus giving elongation factor G a second chance to translocate the tRNAs correctly. Binds to ribosomes in a GTP-dependent manner.</text>
</comment>
<comment type="catalytic activity">
    <reaction evidence="1">
        <text>GTP + H2O = GDP + phosphate + H(+)</text>
        <dbReference type="Rhea" id="RHEA:19669"/>
        <dbReference type="ChEBI" id="CHEBI:15377"/>
        <dbReference type="ChEBI" id="CHEBI:15378"/>
        <dbReference type="ChEBI" id="CHEBI:37565"/>
        <dbReference type="ChEBI" id="CHEBI:43474"/>
        <dbReference type="ChEBI" id="CHEBI:58189"/>
        <dbReference type="EC" id="3.6.5.n1"/>
    </reaction>
</comment>
<comment type="subcellular location">
    <subcellularLocation>
        <location evidence="1">Cell inner membrane</location>
        <topology evidence="1">Peripheral membrane protein</topology>
        <orientation evidence="1">Cytoplasmic side</orientation>
    </subcellularLocation>
</comment>
<comment type="similarity">
    <text evidence="1">Belongs to the TRAFAC class translation factor GTPase superfamily. Classic translation factor GTPase family. LepA subfamily.</text>
</comment>
<dbReference type="EC" id="3.6.5.n1" evidence="1"/>
<dbReference type="EMBL" id="AE002098">
    <property type="protein sequence ID" value="AAF41179.1"/>
    <property type="molecule type" value="Genomic_DNA"/>
</dbReference>
<dbReference type="PIR" id="C81162">
    <property type="entry name" value="C81162"/>
</dbReference>
<dbReference type="RefSeq" id="NP_273808.1">
    <property type="nucleotide sequence ID" value="NC_003112.2"/>
</dbReference>
<dbReference type="RefSeq" id="WP_002225433.1">
    <property type="nucleotide sequence ID" value="NC_003112.2"/>
</dbReference>
<dbReference type="SMR" id="Q9K055"/>
<dbReference type="FunCoup" id="Q9K055">
    <property type="interactions" value="516"/>
</dbReference>
<dbReference type="STRING" id="122586.NMB0766"/>
<dbReference type="PaxDb" id="122586-NMB0766"/>
<dbReference type="KEGG" id="nme:NMB0766"/>
<dbReference type="PATRIC" id="fig|122586.8.peg.971"/>
<dbReference type="HOGENOM" id="CLU_009995_3_3_4"/>
<dbReference type="InParanoid" id="Q9K055"/>
<dbReference type="OrthoDB" id="9801472at2"/>
<dbReference type="Proteomes" id="UP000000425">
    <property type="component" value="Chromosome"/>
</dbReference>
<dbReference type="GO" id="GO:0005886">
    <property type="term" value="C:plasma membrane"/>
    <property type="evidence" value="ECO:0007669"/>
    <property type="project" value="UniProtKB-SubCell"/>
</dbReference>
<dbReference type="GO" id="GO:0005525">
    <property type="term" value="F:GTP binding"/>
    <property type="evidence" value="ECO:0007669"/>
    <property type="project" value="UniProtKB-UniRule"/>
</dbReference>
<dbReference type="GO" id="GO:0003924">
    <property type="term" value="F:GTPase activity"/>
    <property type="evidence" value="ECO:0007669"/>
    <property type="project" value="UniProtKB-UniRule"/>
</dbReference>
<dbReference type="GO" id="GO:0097216">
    <property type="term" value="F:guanosine tetraphosphate binding"/>
    <property type="evidence" value="ECO:0007669"/>
    <property type="project" value="UniProtKB-ARBA"/>
</dbReference>
<dbReference type="GO" id="GO:0043022">
    <property type="term" value="F:ribosome binding"/>
    <property type="evidence" value="ECO:0000318"/>
    <property type="project" value="GO_Central"/>
</dbReference>
<dbReference type="GO" id="GO:0003746">
    <property type="term" value="F:translation elongation factor activity"/>
    <property type="evidence" value="ECO:0007669"/>
    <property type="project" value="UniProtKB-UniRule"/>
</dbReference>
<dbReference type="GO" id="GO:0045727">
    <property type="term" value="P:positive regulation of translation"/>
    <property type="evidence" value="ECO:0000318"/>
    <property type="project" value="GO_Central"/>
</dbReference>
<dbReference type="CDD" id="cd03699">
    <property type="entry name" value="EF4_II"/>
    <property type="match status" value="1"/>
</dbReference>
<dbReference type="CDD" id="cd16260">
    <property type="entry name" value="EF4_III"/>
    <property type="match status" value="1"/>
</dbReference>
<dbReference type="CDD" id="cd01890">
    <property type="entry name" value="LepA"/>
    <property type="match status" value="1"/>
</dbReference>
<dbReference type="CDD" id="cd03709">
    <property type="entry name" value="lepA_C"/>
    <property type="match status" value="1"/>
</dbReference>
<dbReference type="FunFam" id="3.40.50.300:FF:000078">
    <property type="entry name" value="Elongation factor 4"/>
    <property type="match status" value="1"/>
</dbReference>
<dbReference type="FunFam" id="2.40.30.10:FF:000015">
    <property type="entry name" value="Translation factor GUF1, mitochondrial"/>
    <property type="match status" value="1"/>
</dbReference>
<dbReference type="FunFam" id="3.30.70.240:FF:000007">
    <property type="entry name" value="Translation factor GUF1, mitochondrial"/>
    <property type="match status" value="1"/>
</dbReference>
<dbReference type="FunFam" id="3.30.70.2570:FF:000001">
    <property type="entry name" value="Translation factor GUF1, mitochondrial"/>
    <property type="match status" value="1"/>
</dbReference>
<dbReference type="FunFam" id="3.30.70.870:FF:000004">
    <property type="entry name" value="Translation factor GUF1, mitochondrial"/>
    <property type="match status" value="1"/>
</dbReference>
<dbReference type="Gene3D" id="3.30.70.240">
    <property type="match status" value="1"/>
</dbReference>
<dbReference type="Gene3D" id="3.30.70.2570">
    <property type="entry name" value="Elongation factor 4, C-terminal domain"/>
    <property type="match status" value="1"/>
</dbReference>
<dbReference type="Gene3D" id="3.30.70.870">
    <property type="entry name" value="Elongation Factor G (Translational Gtpase), domain 3"/>
    <property type="match status" value="1"/>
</dbReference>
<dbReference type="Gene3D" id="3.40.50.300">
    <property type="entry name" value="P-loop containing nucleotide triphosphate hydrolases"/>
    <property type="match status" value="1"/>
</dbReference>
<dbReference type="Gene3D" id="2.40.30.10">
    <property type="entry name" value="Translation factors"/>
    <property type="match status" value="1"/>
</dbReference>
<dbReference type="HAMAP" id="MF_00071">
    <property type="entry name" value="LepA"/>
    <property type="match status" value="1"/>
</dbReference>
<dbReference type="InterPro" id="IPR006297">
    <property type="entry name" value="EF-4"/>
</dbReference>
<dbReference type="InterPro" id="IPR035647">
    <property type="entry name" value="EFG_III/V"/>
</dbReference>
<dbReference type="InterPro" id="IPR000640">
    <property type="entry name" value="EFG_V-like"/>
</dbReference>
<dbReference type="InterPro" id="IPR004161">
    <property type="entry name" value="EFTu-like_2"/>
</dbReference>
<dbReference type="InterPro" id="IPR031157">
    <property type="entry name" value="G_TR_CS"/>
</dbReference>
<dbReference type="InterPro" id="IPR038363">
    <property type="entry name" value="LepA_C_sf"/>
</dbReference>
<dbReference type="InterPro" id="IPR013842">
    <property type="entry name" value="LepA_CTD"/>
</dbReference>
<dbReference type="InterPro" id="IPR035654">
    <property type="entry name" value="LepA_IV"/>
</dbReference>
<dbReference type="InterPro" id="IPR027417">
    <property type="entry name" value="P-loop_NTPase"/>
</dbReference>
<dbReference type="InterPro" id="IPR005225">
    <property type="entry name" value="Small_GTP-bd"/>
</dbReference>
<dbReference type="InterPro" id="IPR000795">
    <property type="entry name" value="T_Tr_GTP-bd_dom"/>
</dbReference>
<dbReference type="InterPro" id="IPR009000">
    <property type="entry name" value="Transl_B-barrel_sf"/>
</dbReference>
<dbReference type="NCBIfam" id="TIGR01393">
    <property type="entry name" value="lepA"/>
    <property type="match status" value="1"/>
</dbReference>
<dbReference type="NCBIfam" id="TIGR00231">
    <property type="entry name" value="small_GTP"/>
    <property type="match status" value="1"/>
</dbReference>
<dbReference type="PANTHER" id="PTHR43512:SF4">
    <property type="entry name" value="TRANSLATION FACTOR GUF1 HOMOLOG, CHLOROPLASTIC"/>
    <property type="match status" value="1"/>
</dbReference>
<dbReference type="PANTHER" id="PTHR43512">
    <property type="entry name" value="TRANSLATION FACTOR GUF1-RELATED"/>
    <property type="match status" value="1"/>
</dbReference>
<dbReference type="Pfam" id="PF00679">
    <property type="entry name" value="EFG_C"/>
    <property type="match status" value="1"/>
</dbReference>
<dbReference type="Pfam" id="PF00009">
    <property type="entry name" value="GTP_EFTU"/>
    <property type="match status" value="1"/>
</dbReference>
<dbReference type="Pfam" id="PF03144">
    <property type="entry name" value="GTP_EFTU_D2"/>
    <property type="match status" value="1"/>
</dbReference>
<dbReference type="Pfam" id="PF06421">
    <property type="entry name" value="LepA_C"/>
    <property type="match status" value="1"/>
</dbReference>
<dbReference type="PRINTS" id="PR00315">
    <property type="entry name" value="ELONGATNFCT"/>
</dbReference>
<dbReference type="SMART" id="SM00838">
    <property type="entry name" value="EFG_C"/>
    <property type="match status" value="1"/>
</dbReference>
<dbReference type="SUPFAM" id="SSF54980">
    <property type="entry name" value="EF-G C-terminal domain-like"/>
    <property type="match status" value="2"/>
</dbReference>
<dbReference type="SUPFAM" id="SSF52540">
    <property type="entry name" value="P-loop containing nucleoside triphosphate hydrolases"/>
    <property type="match status" value="1"/>
</dbReference>
<dbReference type="SUPFAM" id="SSF50447">
    <property type="entry name" value="Translation proteins"/>
    <property type="match status" value="1"/>
</dbReference>
<dbReference type="PROSITE" id="PS00301">
    <property type="entry name" value="G_TR_1"/>
    <property type="match status" value="1"/>
</dbReference>
<dbReference type="PROSITE" id="PS51722">
    <property type="entry name" value="G_TR_2"/>
    <property type="match status" value="1"/>
</dbReference>
<gene>
    <name evidence="1" type="primary">lepA</name>
    <name type="ordered locus">NMB0766</name>
</gene>
<reference key="1">
    <citation type="journal article" date="2000" name="Science">
        <title>Complete genome sequence of Neisseria meningitidis serogroup B strain MC58.</title>
        <authorList>
            <person name="Tettelin H."/>
            <person name="Saunders N.J."/>
            <person name="Heidelberg J.F."/>
            <person name="Jeffries A.C."/>
            <person name="Nelson K.E."/>
            <person name="Eisen J.A."/>
            <person name="Ketchum K.A."/>
            <person name="Hood D.W."/>
            <person name="Peden J.F."/>
            <person name="Dodson R.J."/>
            <person name="Nelson W.C."/>
            <person name="Gwinn M.L."/>
            <person name="DeBoy R.T."/>
            <person name="Peterson J.D."/>
            <person name="Hickey E.K."/>
            <person name="Haft D.H."/>
            <person name="Salzberg S.L."/>
            <person name="White O."/>
            <person name="Fleischmann R.D."/>
            <person name="Dougherty B.A."/>
            <person name="Mason T.M."/>
            <person name="Ciecko A."/>
            <person name="Parksey D.S."/>
            <person name="Blair E."/>
            <person name="Cittone H."/>
            <person name="Clark E.B."/>
            <person name="Cotton M.D."/>
            <person name="Utterback T.R."/>
            <person name="Khouri H.M."/>
            <person name="Qin H."/>
            <person name="Vamathevan J.J."/>
            <person name="Gill J."/>
            <person name="Scarlato V."/>
            <person name="Masignani V."/>
            <person name="Pizza M."/>
            <person name="Grandi G."/>
            <person name="Sun L."/>
            <person name="Smith H.O."/>
            <person name="Fraser C.M."/>
            <person name="Moxon E.R."/>
            <person name="Rappuoli R."/>
            <person name="Venter J.C."/>
        </authorList>
    </citation>
    <scope>NUCLEOTIDE SEQUENCE [LARGE SCALE GENOMIC DNA]</scope>
    <source>
        <strain>ATCC BAA-335 / MC58</strain>
    </source>
</reference>
<name>LEPA_NEIMB</name>
<evidence type="ECO:0000255" key="1">
    <source>
        <dbReference type="HAMAP-Rule" id="MF_00071"/>
    </source>
</evidence>
<accession>Q9K055</accession>
<sequence length="597" mass="66016">MKNIRNFSIIAHIDHGKSTLADRFIQYCGGLDLREMSTQVLDSMDIEKERGITIKAQTAALNYKARDGQVYQLNLIDTPGHVDFSYEVSRSLSACEGALLVVDASQGVEAQTVANCYTAIDLGVEVVPVLNKIDLPAADPERVEQEIEDIIGIDAVGAVQCSAKSGIGVEDVLEEIVAKIPAPTGDENAPLQAVIVDSWFDNYVGVVMLIRVKNGTIKLKDKVRFMSTKAETQVEQLGVFTPKSVQKQELKAGEVGFLITGVKELGQAKVGDTVTLVANPATEPLPGFQEVQSQVFAGLYPVESHDYEALRDALEKLQLNDASLKFEPEVSQALGFGFRCGFLGLLHLEIVQERLEREFDMDLITTAPTVIYEVVLKSGEKIEVENPSKLPDIGSIETILEPIITATILVPQEYVGNVMTLCNQKRGVQVNMQYMGRQVMLTYDLPMNEVVMDFFDKLKSTSRGYASLDYHFKEFQPSDLIKLDIMVNGEKVDALSLIVHRQSAVHRGRELASKMRELIPRQMFDIAVQAAIGSQIIARENVKALRKNVLAKCYGGDITRKKKLLEKQKAGKRRMKQVGNVEIPQSAFLAILQVSDK</sequence>
<proteinExistence type="inferred from homology"/>
<feature type="chain" id="PRO_0000176309" description="Elongation factor 4">
    <location>
        <begin position="1"/>
        <end position="597"/>
    </location>
</feature>
<feature type="domain" description="tr-type G">
    <location>
        <begin position="2"/>
        <end position="184"/>
    </location>
</feature>
<feature type="binding site" evidence="1">
    <location>
        <begin position="14"/>
        <end position="19"/>
    </location>
    <ligand>
        <name>GTP</name>
        <dbReference type="ChEBI" id="CHEBI:37565"/>
    </ligand>
</feature>
<feature type="binding site" evidence="1">
    <location>
        <begin position="131"/>
        <end position="134"/>
    </location>
    <ligand>
        <name>GTP</name>
        <dbReference type="ChEBI" id="CHEBI:37565"/>
    </ligand>
</feature>